<sequence>SPVISYDKT</sequence>
<evidence type="ECO:0000269" key="1">
    <source>
    </source>
</evidence>
<evidence type="ECO:0000303" key="2">
    <source>
    </source>
</evidence>
<evidence type="ECO:0000305" key="3"/>
<organism>
    <name type="scientific">Bombyx mori</name>
    <name type="common">Silk moth</name>
    <dbReference type="NCBI Taxonomy" id="7091"/>
    <lineage>
        <taxon>Eukaryota</taxon>
        <taxon>Metazoa</taxon>
        <taxon>Ecdysozoa</taxon>
        <taxon>Arthropoda</taxon>
        <taxon>Hexapoda</taxon>
        <taxon>Insecta</taxon>
        <taxon>Pterygota</taxon>
        <taxon>Neoptera</taxon>
        <taxon>Endopterygota</taxon>
        <taxon>Lepidoptera</taxon>
        <taxon>Glossata</taxon>
        <taxon>Ditrysia</taxon>
        <taxon>Bombycoidea</taxon>
        <taxon>Bombycidae</taxon>
        <taxon>Bombycinae</taxon>
        <taxon>Bombyx</taxon>
    </lineage>
</organism>
<name>UP10_BOMMO</name>
<feature type="chain" id="PRO_0000274262" description="Unknown protein 10 from 2D-page">
    <location>
        <begin position="1"/>
        <end position="9" status="greater than"/>
    </location>
</feature>
<feature type="non-terminal residue" evidence="2">
    <location>
        <position position="9"/>
    </location>
</feature>
<accession>P82208</accession>
<reference evidence="3" key="1">
    <citation type="journal article" date="2001" name="Yi Chuan Xue Bao">
        <title>Protein database for several tissues derived from five instar of silkworm.</title>
        <authorList>
            <person name="Zhong B.-X."/>
        </authorList>
    </citation>
    <scope>PROTEIN SEQUENCE</scope>
    <source>
        <strain evidence="1">Xinhang X Keming</strain>
        <tissue evidence="1">Body wall</tissue>
        <tissue evidence="1">Fat body</tissue>
    </source>
</reference>
<protein>
    <recommendedName>
        <fullName>Unknown protein 10 from 2D-page</fullName>
    </recommendedName>
</protein>
<keyword id="KW-0903">Direct protein sequencing</keyword>
<keyword id="KW-1185">Reference proteome</keyword>
<proteinExistence type="evidence at protein level"/>
<dbReference type="InParanoid" id="P82208"/>
<dbReference type="Proteomes" id="UP000005204">
    <property type="component" value="Unassembled WGS sequence"/>
</dbReference>